<protein>
    <recommendedName>
        <fullName>Cytochrome P450 6B2</fullName>
        <ecNumber>1.14.14.1</ecNumber>
    </recommendedName>
    <alternativeName>
        <fullName>CYPVIB2</fullName>
    </alternativeName>
</protein>
<sequence length="504" mass="58218">MWIFYFPAVISVLIVTLYFYFTRTFNYWKKRNVRGPEPVVFFGNLKDSALRKKNMGVVMEELYNMFPEEKVIGIYRMTSPCLLVRDLEVIKHIMIKDFEVFSDRGLEFSKEGLGQNLFHADGDTWRTLRNRFTPIFTSGKLKNMFYLMNEGADNFIDHVSKECEKHQEFEIHTLLQTYTMSTISSCAFGVSYDTISDKLDTLAIVDKIISEPSYAIELDMMYPGLLPKLNLSIFPSVVHKFFKNLVNTIVTQRNGKPSGRNDFMDLILELRQMGEITSNKYGNNMSTLEITESVMCAQAFVFYIAGYETSATTMAYLTYQLALNPDIQNKLIAEIDEAIKANGGKVTYDTVKDMKYLNKVFDETLRMYSIVEPLQRKAIRDYKLPGTDVVIEKDTVVLISPRGIHYDPKYYDNPKQFNPERFFAEEVGKRHPCAYLPFGLGQRNCIGMRFGRLQSLLCITKLLSKFRLEPSKNTDRNLQVEPYRFIIGPKGGIRLNIVPRKDVS</sequence>
<name>CP6B2_HELAM</name>
<comment type="catalytic activity">
    <reaction>
        <text>an organic molecule + reduced [NADPH--hemoprotein reductase] + O2 = an alcohol + oxidized [NADPH--hemoprotein reductase] + H2O + H(+)</text>
        <dbReference type="Rhea" id="RHEA:17149"/>
        <dbReference type="Rhea" id="RHEA-COMP:11964"/>
        <dbReference type="Rhea" id="RHEA-COMP:11965"/>
        <dbReference type="ChEBI" id="CHEBI:15377"/>
        <dbReference type="ChEBI" id="CHEBI:15378"/>
        <dbReference type="ChEBI" id="CHEBI:15379"/>
        <dbReference type="ChEBI" id="CHEBI:30879"/>
        <dbReference type="ChEBI" id="CHEBI:57618"/>
        <dbReference type="ChEBI" id="CHEBI:58210"/>
        <dbReference type="ChEBI" id="CHEBI:142491"/>
        <dbReference type="EC" id="1.14.14.1"/>
    </reaction>
</comment>
<comment type="cofactor">
    <cofactor evidence="1">
        <name>heme</name>
        <dbReference type="ChEBI" id="CHEBI:30413"/>
    </cofactor>
</comment>
<comment type="subcellular location">
    <subcellularLocation>
        <location evidence="2">Endoplasmic reticulum membrane</location>
        <topology evidence="2">Peripheral membrane protein</topology>
    </subcellularLocation>
    <subcellularLocation>
        <location evidence="2">Microsome membrane</location>
        <topology evidence="2">Peripheral membrane protein</topology>
    </subcellularLocation>
</comment>
<comment type="induction">
    <text>By phenobarbital and the insecticide permethrin.</text>
</comment>
<comment type="similarity">
    <text evidence="2">Belongs to the cytochrome P450 family.</text>
</comment>
<keyword id="KW-0256">Endoplasmic reticulum</keyword>
<keyword id="KW-0349">Heme</keyword>
<keyword id="KW-0408">Iron</keyword>
<keyword id="KW-0472">Membrane</keyword>
<keyword id="KW-0479">Metal-binding</keyword>
<keyword id="KW-0492">Microsome</keyword>
<keyword id="KW-0503">Monooxygenase</keyword>
<keyword id="KW-0560">Oxidoreductase</keyword>
<feature type="chain" id="PRO_0000051894" description="Cytochrome P450 6B2">
    <location>
        <begin position="1"/>
        <end position="504"/>
    </location>
</feature>
<feature type="binding site" description="axial binding residue" evidence="1">
    <location>
        <position position="445"/>
    </location>
    <ligand>
        <name>heme</name>
        <dbReference type="ChEBI" id="CHEBI:30413"/>
    </ligand>
    <ligandPart>
        <name>Fe</name>
        <dbReference type="ChEBI" id="CHEBI:18248"/>
    </ligandPart>
</feature>
<feature type="sequence variant">
    <original>L</original>
    <variation>V</variation>
    <location>
        <position position="106"/>
    </location>
</feature>
<feature type="sequence variant">
    <original>Q</original>
    <variation>S</variation>
    <location>
        <position position="115"/>
    </location>
</feature>
<gene>
    <name type="primary">CYP6B2</name>
</gene>
<organism>
    <name type="scientific">Helicoverpa armigera</name>
    <name type="common">Cotton bollworm</name>
    <name type="synonym">Heliothis armigera</name>
    <dbReference type="NCBI Taxonomy" id="29058"/>
    <lineage>
        <taxon>Eukaryota</taxon>
        <taxon>Metazoa</taxon>
        <taxon>Ecdysozoa</taxon>
        <taxon>Arthropoda</taxon>
        <taxon>Hexapoda</taxon>
        <taxon>Insecta</taxon>
        <taxon>Pterygota</taxon>
        <taxon>Neoptera</taxon>
        <taxon>Endopterygota</taxon>
        <taxon>Lepidoptera</taxon>
        <taxon>Glossata</taxon>
        <taxon>Ditrysia</taxon>
        <taxon>Noctuoidea</taxon>
        <taxon>Noctuidae</taxon>
        <taxon>Heliothinae</taxon>
        <taxon>Helicoverpa</taxon>
    </lineage>
</organism>
<proteinExistence type="evidence at transcript level"/>
<accession>Q27664</accession>
<evidence type="ECO:0000250" key="1"/>
<evidence type="ECO:0000305" key="2"/>
<dbReference type="EC" id="1.14.14.1"/>
<dbReference type="EMBL" id="U18085">
    <property type="protein sequence ID" value="AAB60252.1"/>
    <property type="molecule type" value="mRNA"/>
</dbReference>
<dbReference type="SMR" id="Q27664"/>
<dbReference type="OrthoDB" id="2789670at2759"/>
<dbReference type="GO" id="GO:0005789">
    <property type="term" value="C:endoplasmic reticulum membrane"/>
    <property type="evidence" value="ECO:0007669"/>
    <property type="project" value="UniProtKB-SubCell"/>
</dbReference>
<dbReference type="GO" id="GO:0020037">
    <property type="term" value="F:heme binding"/>
    <property type="evidence" value="ECO:0007669"/>
    <property type="project" value="InterPro"/>
</dbReference>
<dbReference type="GO" id="GO:0005506">
    <property type="term" value="F:iron ion binding"/>
    <property type="evidence" value="ECO:0007669"/>
    <property type="project" value="InterPro"/>
</dbReference>
<dbReference type="GO" id="GO:0016712">
    <property type="term" value="F:oxidoreductase activity, acting on paired donors, with incorporation or reduction of molecular oxygen, reduced flavin or flavoprotein as one donor, and incorporation of one atom of oxygen"/>
    <property type="evidence" value="ECO:0007669"/>
    <property type="project" value="UniProtKB-EC"/>
</dbReference>
<dbReference type="CDD" id="cd11056">
    <property type="entry name" value="CYP6-like"/>
    <property type="match status" value="1"/>
</dbReference>
<dbReference type="FunFam" id="1.10.630.10:FF:000042">
    <property type="entry name" value="Cytochrome P450"/>
    <property type="match status" value="1"/>
</dbReference>
<dbReference type="Gene3D" id="1.10.630.10">
    <property type="entry name" value="Cytochrome P450"/>
    <property type="match status" value="1"/>
</dbReference>
<dbReference type="InterPro" id="IPR001128">
    <property type="entry name" value="Cyt_P450"/>
</dbReference>
<dbReference type="InterPro" id="IPR017972">
    <property type="entry name" value="Cyt_P450_CS"/>
</dbReference>
<dbReference type="InterPro" id="IPR002401">
    <property type="entry name" value="Cyt_P450_E_grp-I"/>
</dbReference>
<dbReference type="InterPro" id="IPR036396">
    <property type="entry name" value="Cyt_P450_sf"/>
</dbReference>
<dbReference type="InterPro" id="IPR050476">
    <property type="entry name" value="Insect_CytP450_Detox"/>
</dbReference>
<dbReference type="PANTHER" id="PTHR24292">
    <property type="entry name" value="CYTOCHROME P450"/>
    <property type="match status" value="1"/>
</dbReference>
<dbReference type="PANTHER" id="PTHR24292:SF100">
    <property type="entry name" value="CYTOCHROME P450 6A16, ISOFORM B-RELATED"/>
    <property type="match status" value="1"/>
</dbReference>
<dbReference type="Pfam" id="PF00067">
    <property type="entry name" value="p450"/>
    <property type="match status" value="1"/>
</dbReference>
<dbReference type="PRINTS" id="PR00463">
    <property type="entry name" value="EP450I"/>
</dbReference>
<dbReference type="PRINTS" id="PR00385">
    <property type="entry name" value="P450"/>
</dbReference>
<dbReference type="SUPFAM" id="SSF48264">
    <property type="entry name" value="Cytochrome P450"/>
    <property type="match status" value="1"/>
</dbReference>
<dbReference type="PROSITE" id="PS00086">
    <property type="entry name" value="CYTOCHROME_P450"/>
    <property type="match status" value="1"/>
</dbReference>
<reference key="1">
    <citation type="journal article" date="1995" name="Insect Biochem. Mol. Biol.">
        <title>Isolation and sequence analysis of a cDNA clone for a pyrethroid inducible cytochrome P450 from Helicoverpa armigera.</title>
        <authorList>
            <person name="Wang X.P."/>
            <person name="Hobbs A.A."/>
        </authorList>
    </citation>
    <scope>NUCLEOTIDE SEQUENCE [MRNA]</scope>
    <source>
        <tissue>Midgut</tissue>
    </source>
</reference>